<organism>
    <name type="scientific">Ectopseudomonas mendocina</name>
    <name type="common">Pseudomonas mendocina</name>
    <dbReference type="NCBI Taxonomy" id="300"/>
    <lineage>
        <taxon>Bacteria</taxon>
        <taxon>Pseudomonadati</taxon>
        <taxon>Pseudomonadota</taxon>
        <taxon>Gammaproteobacteria</taxon>
        <taxon>Pseudomonadales</taxon>
        <taxon>Pseudomonadaceae</taxon>
        <taxon>Ectopseudomonas</taxon>
    </lineage>
</organism>
<keyword id="KW-0903">Direct protein sequencing</keyword>
<keyword id="KW-0249">Electron transport</keyword>
<keyword id="KW-0349">Heme</keyword>
<keyword id="KW-0408">Iron</keyword>
<keyword id="KW-0479">Metal-binding</keyword>
<keyword id="KW-0813">Transport</keyword>
<proteinExistence type="evidence at protein level"/>
<sequence length="82" mass="8368">ASGEELFKSKPCGACHSVQAKLVGPALKDVAAKNAGVDGAADVLAGHIKNGSTGVWGAMPMPPNPVTEEEAKTLAEWVLTLK</sequence>
<name>CY551_ECTME</name>
<accession>P00102</accession>
<comment type="function">
    <text>This is a prokaryotic monoheme cytochrome, unreactive with mitochondrial cytochrome C oxidase or reductase. It functions in nitrite and nitrate respiration in Pseudomonas, but it is also found in other bacteria.</text>
</comment>
<comment type="PTM">
    <text>Binds 1 heme c group covalently per subunit.</text>
</comment>
<feature type="chain" id="PRO_0000108397" description="Cytochrome c-551">
    <location>
        <begin position="1"/>
        <end position="82"/>
    </location>
</feature>
<feature type="binding site" description="covalent">
    <location>
        <position position="12"/>
    </location>
    <ligand>
        <name>heme c</name>
        <dbReference type="ChEBI" id="CHEBI:61717"/>
    </ligand>
</feature>
<feature type="binding site" description="covalent">
    <location>
        <position position="15"/>
    </location>
    <ligand>
        <name>heme c</name>
        <dbReference type="ChEBI" id="CHEBI:61717"/>
    </ligand>
</feature>
<feature type="binding site" description="axial binding residue">
    <location>
        <position position="16"/>
    </location>
    <ligand>
        <name>heme c</name>
        <dbReference type="ChEBI" id="CHEBI:61717"/>
    </ligand>
    <ligandPart>
        <name>Fe</name>
        <dbReference type="ChEBI" id="CHEBI:18248"/>
    </ligandPart>
</feature>
<feature type="binding site" description="axial binding residue">
    <location>
        <position position="61"/>
    </location>
    <ligand>
        <name>heme c</name>
        <dbReference type="ChEBI" id="CHEBI:61717"/>
    </ligand>
    <ligandPart>
        <name>Fe</name>
        <dbReference type="ChEBI" id="CHEBI:18248"/>
    </ligandPart>
</feature>
<dbReference type="PIR" id="A00094">
    <property type="entry name" value="CCPS5M"/>
</dbReference>
<dbReference type="SMR" id="P00102"/>
<dbReference type="STRING" id="1001585.MDS_0137"/>
<dbReference type="GO" id="GO:0009055">
    <property type="term" value="F:electron transfer activity"/>
    <property type="evidence" value="ECO:0007669"/>
    <property type="project" value="InterPro"/>
</dbReference>
<dbReference type="GO" id="GO:0020037">
    <property type="term" value="F:heme binding"/>
    <property type="evidence" value="ECO:0007669"/>
    <property type="project" value="InterPro"/>
</dbReference>
<dbReference type="GO" id="GO:0005506">
    <property type="term" value="F:iron ion binding"/>
    <property type="evidence" value="ECO:0007669"/>
    <property type="project" value="InterPro"/>
</dbReference>
<dbReference type="Gene3D" id="1.10.760.10">
    <property type="entry name" value="Cytochrome c-like domain"/>
    <property type="match status" value="1"/>
</dbReference>
<dbReference type="InterPro" id="IPR009056">
    <property type="entry name" value="Cyt_c-like_dom"/>
</dbReference>
<dbReference type="InterPro" id="IPR036909">
    <property type="entry name" value="Cyt_c-like_dom_sf"/>
</dbReference>
<dbReference type="InterPro" id="IPR002324">
    <property type="entry name" value="Cyt_c_ID"/>
</dbReference>
<dbReference type="Pfam" id="PF00034">
    <property type="entry name" value="Cytochrom_C"/>
    <property type="match status" value="1"/>
</dbReference>
<dbReference type="PRINTS" id="PR00606">
    <property type="entry name" value="CYTCHROMECID"/>
</dbReference>
<dbReference type="SUPFAM" id="SSF46626">
    <property type="entry name" value="Cytochrome c"/>
    <property type="match status" value="1"/>
</dbReference>
<dbReference type="PROSITE" id="PS51007">
    <property type="entry name" value="CYTC"/>
    <property type="match status" value="1"/>
</dbReference>
<reference key="1">
    <citation type="journal article" date="1973" name="Biochem. J.">
        <title>The amino acid sequences of cytochromes c-551 from three species of Pseudomonas.</title>
        <authorList>
            <person name="Ambler R.P."/>
            <person name="Wynn M."/>
        </authorList>
    </citation>
    <scope>PROTEIN SEQUENCE</scope>
    <source>
        <strain>CH110</strain>
    </source>
</reference>
<protein>
    <recommendedName>
        <fullName>Cytochrome c-551</fullName>
    </recommendedName>
    <alternativeName>
        <fullName>Cytochrome C8</fullName>
    </alternativeName>
    <alternativeName>
        <fullName>Cytochrome c551</fullName>
    </alternativeName>
</protein>